<dbReference type="EMBL" id="AF244901">
    <property type="protein sequence ID" value="AAF79953.1"/>
    <property type="molecule type" value="mRNA"/>
</dbReference>
<dbReference type="PIR" id="JC7105">
    <property type="entry name" value="JC7105"/>
</dbReference>
<dbReference type="PDB" id="2VRP">
    <property type="method" value="X-ray"/>
    <property type="resolution" value="2.41 A"/>
    <property type="chains" value="B=24-146"/>
</dbReference>
<dbReference type="PDB" id="3BX4">
    <property type="method" value="X-ray"/>
    <property type="resolution" value="1.70 A"/>
    <property type="chains" value="B/D=1-146"/>
</dbReference>
<dbReference type="PDB" id="3WWK">
    <property type="method" value="X-ray"/>
    <property type="resolution" value="2.98 A"/>
    <property type="chains" value="B/E/H/K=1-146"/>
</dbReference>
<dbReference type="PDBsum" id="2VRP"/>
<dbReference type="PDBsum" id="3BX4"/>
<dbReference type="PDBsum" id="3WWK"/>
<dbReference type="SMR" id="Q9I840"/>
<dbReference type="DIP" id="DIP-61335N"/>
<dbReference type="IntAct" id="Q9I840">
    <property type="interactions" value="1"/>
</dbReference>
<dbReference type="EvolutionaryTrace" id="Q9I840"/>
<dbReference type="GO" id="GO:0005576">
    <property type="term" value="C:extracellular region"/>
    <property type="evidence" value="ECO:0007669"/>
    <property type="project" value="UniProtKB-SubCell"/>
</dbReference>
<dbReference type="GO" id="GO:0046872">
    <property type="term" value="F:metal ion binding"/>
    <property type="evidence" value="ECO:0007669"/>
    <property type="project" value="UniProtKB-KW"/>
</dbReference>
<dbReference type="GO" id="GO:0090729">
    <property type="term" value="F:toxin activity"/>
    <property type="evidence" value="ECO:0007669"/>
    <property type="project" value="UniProtKB-KW"/>
</dbReference>
<dbReference type="FunFam" id="3.10.100.10:FF:000087">
    <property type="entry name" value="Snaclec rhodocetin subunit delta"/>
    <property type="match status" value="1"/>
</dbReference>
<dbReference type="Gene3D" id="3.10.100.10">
    <property type="entry name" value="Mannose-Binding Protein A, subunit A"/>
    <property type="match status" value="1"/>
</dbReference>
<dbReference type="InterPro" id="IPR001304">
    <property type="entry name" value="C-type_lectin-like"/>
</dbReference>
<dbReference type="InterPro" id="IPR016186">
    <property type="entry name" value="C-type_lectin-like/link_sf"/>
</dbReference>
<dbReference type="InterPro" id="IPR050111">
    <property type="entry name" value="C-type_lectin/snaclec_domain"/>
</dbReference>
<dbReference type="InterPro" id="IPR018378">
    <property type="entry name" value="C-type_lectin_CS"/>
</dbReference>
<dbReference type="InterPro" id="IPR016187">
    <property type="entry name" value="CTDL_fold"/>
</dbReference>
<dbReference type="PANTHER" id="PTHR22803">
    <property type="entry name" value="MANNOSE, PHOSPHOLIPASE, LECTIN RECEPTOR RELATED"/>
    <property type="match status" value="1"/>
</dbReference>
<dbReference type="Pfam" id="PF00059">
    <property type="entry name" value="Lectin_C"/>
    <property type="match status" value="1"/>
</dbReference>
<dbReference type="PRINTS" id="PR01504">
    <property type="entry name" value="PNCREATITSAP"/>
</dbReference>
<dbReference type="SMART" id="SM00034">
    <property type="entry name" value="CLECT"/>
    <property type="match status" value="1"/>
</dbReference>
<dbReference type="SUPFAM" id="SSF56436">
    <property type="entry name" value="C-type lectin-like"/>
    <property type="match status" value="1"/>
</dbReference>
<dbReference type="PROSITE" id="PS00615">
    <property type="entry name" value="C_TYPE_LECTIN_1"/>
    <property type="match status" value="1"/>
</dbReference>
<dbReference type="PROSITE" id="PS50041">
    <property type="entry name" value="C_TYPE_LECTIN_2"/>
    <property type="match status" value="1"/>
</dbReference>
<feature type="signal peptide" evidence="2 3 6 12">
    <location>
        <begin position="1"/>
        <end position="23"/>
    </location>
</feature>
<feature type="chain" id="PRO_0000355239" description="Snaclec rhodocytin subunit beta">
    <location>
        <begin position="24"/>
        <end position="146"/>
    </location>
</feature>
<feature type="domain" description="C-type lectin" evidence="1">
    <location>
        <begin position="32"/>
        <end position="143"/>
    </location>
</feature>
<feature type="disulfide bond">
    <location>
        <begin position="25"/>
        <end position="36"/>
    </location>
</feature>
<feature type="disulfide bond">
    <location>
        <begin position="53"/>
        <end position="142"/>
    </location>
</feature>
<feature type="disulfide bond" description="Interchain (with C-83 in alpha chain)">
    <location>
        <position position="98"/>
    </location>
</feature>
<feature type="disulfide bond">
    <location>
        <begin position="119"/>
        <end position="134"/>
    </location>
</feature>
<feature type="strand" evidence="14">
    <location>
        <begin position="30"/>
        <end position="32"/>
    </location>
</feature>
<feature type="strand" evidence="14">
    <location>
        <begin position="35"/>
        <end position="44"/>
    </location>
</feature>
<feature type="helix" evidence="14">
    <location>
        <begin position="46"/>
        <end position="55"/>
    </location>
</feature>
<feature type="strand" evidence="14">
    <location>
        <begin position="56"/>
        <end position="58"/>
    </location>
</feature>
<feature type="helix" evidence="14">
    <location>
        <begin position="68"/>
        <end position="78"/>
    </location>
</feature>
<feature type="turn" evidence="14">
    <location>
        <begin position="79"/>
        <end position="84"/>
    </location>
</feature>
<feature type="strand" evidence="14">
    <location>
        <begin position="85"/>
        <end position="88"/>
    </location>
</feature>
<feature type="strand" evidence="14">
    <location>
        <begin position="96"/>
        <end position="98"/>
    </location>
</feature>
<feature type="strand" evidence="14">
    <location>
        <begin position="100"/>
        <end position="102"/>
    </location>
</feature>
<feature type="strand" evidence="14">
    <location>
        <begin position="118"/>
        <end position="123"/>
    </location>
</feature>
<feature type="strand" evidence="14">
    <location>
        <begin position="129"/>
        <end position="133"/>
    </location>
</feature>
<feature type="strand" evidence="14">
    <location>
        <begin position="138"/>
        <end position="145"/>
    </location>
</feature>
<keyword id="KW-0002">3D-structure</keyword>
<keyword id="KW-0903">Direct protein sequencing</keyword>
<keyword id="KW-1015">Disulfide bond</keyword>
<keyword id="KW-1199">Hemostasis impairing toxin</keyword>
<keyword id="KW-0479">Metal-binding</keyword>
<keyword id="KW-1202">Platelet aggregation activating toxin</keyword>
<keyword id="KW-0964">Secreted</keyword>
<keyword id="KW-0732">Signal</keyword>
<keyword id="KW-0800">Toxin</keyword>
<sequence length="146" mass="16770">MGRFIFVSFGLLVVFLSLSGTGADCPSGWSSYEGHCYKPFNEPKNWADAERFCKLQPKHSHLVSFQSAEEADFVVKLTRPRLKANLVWMGLSNIWHGCNWQWSDGARLNYKDWQEQSECLAFRGVHTEWLNMDCSSTCSFVCKFKA</sequence>
<organism>
    <name type="scientific">Calloselasma rhodostoma</name>
    <name type="common">Malayan pit viper</name>
    <name type="synonym">Agkistrodon rhodostoma</name>
    <dbReference type="NCBI Taxonomy" id="8717"/>
    <lineage>
        <taxon>Eukaryota</taxon>
        <taxon>Metazoa</taxon>
        <taxon>Chordata</taxon>
        <taxon>Craniata</taxon>
        <taxon>Vertebrata</taxon>
        <taxon>Euteleostomi</taxon>
        <taxon>Lepidosauria</taxon>
        <taxon>Squamata</taxon>
        <taxon>Bifurcata</taxon>
        <taxon>Unidentata</taxon>
        <taxon>Episquamata</taxon>
        <taxon>Toxicofera</taxon>
        <taxon>Serpentes</taxon>
        <taxon>Colubroidea</taxon>
        <taxon>Viperidae</taxon>
        <taxon>Crotalinae</taxon>
        <taxon>Calloselasma</taxon>
    </lineage>
</organism>
<comment type="function">
    <text evidence="3 4 5 6 7 8 11 12">Elicits platelet aggregation by the binding to the C-type lectin domain family 1 member B (CLEC1B/CLEC2). Binding leads to tyrosine phosphorylation in the cytoplasmic tail of CLEC1B, which promotes the binding of spleen tyrosine kinase (Syk), subsequent activation of PLCgamma2, and platelet activation and aggregation. Binding to GPIbalpha (GP1BA) and alpha2/beta-1 (ITGA2/ITGB1) may also induce aggregation, but this is controversial.</text>
</comment>
<comment type="subunit">
    <text evidence="6 9 10 12">Dimer (non-covalently linked) of heterodimers of subunits alpha and beta (disulfide-linked).</text>
</comment>
<comment type="subcellular location">
    <subcellularLocation>
        <location>Secreted</location>
    </subcellularLocation>
</comment>
<comment type="tissue specificity">
    <text>Expressed by the venom gland.</text>
</comment>
<comment type="similarity">
    <text evidence="13">Belongs to the snaclec family.</text>
</comment>
<protein>
    <recommendedName>
        <fullName>Snaclec rhodocytin subunit beta</fullName>
    </recommendedName>
    <alternativeName>
        <fullName>Aggretin beta chain</fullName>
    </alternativeName>
    <alternativeName>
        <fullName>Rhodoaggretin subunit beta</fullName>
    </alternativeName>
</protein>
<proteinExistence type="evidence at protein level"/>
<reference key="1">
    <citation type="journal article" date="1999" name="Biochem. Biophys. Res. Commun.">
        <title>Molecular cloning and sequence analysis of aggretin, a collagen-like platelet aggregation inducer.</title>
        <authorList>
            <person name="Chung C.-H."/>
            <person name="Au L.-C."/>
            <person name="Huang T.-F."/>
        </authorList>
    </citation>
    <scope>NUCLEOTIDE SEQUENCE [MRNA]</scope>
    <scope>PROTEIN SEQUENCE OF 24-41</scope>
    <source>
        <tissue>Venom</tissue>
        <tissue>Venom gland</tissue>
    </source>
</reference>
<reference key="2">
    <citation type="journal article" date="2001" name="J. Biol. Chem.">
        <title>Aggretin, a heterodimeric C-type lectin from Calloselasma rhodostoma (malayan pit viper), stimulates platelets by binding to alpha 2beta 1 integrin and glycoprotein Ib, activating Syk and phospholipase Cgamma 2, but does not involve the glycoprotein VI/Fc receptor gamma chain collagen receptor.</title>
        <authorList>
            <person name="Navdaev A."/>
            <person name="Clemetson J.M."/>
            <person name="Polgar J."/>
            <person name="Kehrel B.E."/>
            <person name="Glauner M."/>
            <person name="Magnenat E."/>
            <person name="Wells T.N.C."/>
            <person name="Clemetson K.J."/>
        </authorList>
    </citation>
    <scope>PROTEIN SEQUENCE OF 24-53</scope>
    <scope>FUNCTION</scope>
</reference>
<reference key="3">
    <citation type="journal article" date="1998" name="Biochem. Biophys. Res. Commun.">
        <title>Rhodocytin, a functional novel platelet agonist belonging to the heterodimeric C-type lectin family, induces platelet aggregation independently of glycoprotein Ib.</title>
        <authorList>
            <person name="Shin Y."/>
            <person name="Morita T."/>
        </authorList>
    </citation>
    <scope>PROTEIN SEQUENCE OF 24-43</scope>
    <scope>FUNCTION</scope>
    <scope>SUBUNIT</scope>
    <source>
        <tissue>Venom</tissue>
    </source>
</reference>
<reference key="4">
    <citation type="journal article" date="2001" name="FEBS Lett.">
        <title>A novel dimer of a C-type lectin-like heterodimer from the venom of Calloselasma rhodostoma (Malayan pit viper).</title>
        <authorList>
            <person name="Wang R."/>
            <person name="Kong C."/>
            <person name="Kolatkar P."/>
            <person name="Chung M.C."/>
        </authorList>
    </citation>
    <scope>PROTEIN SEQUENCE OF 24-42</scope>
    <scope>FUNCTION</scope>
    <scope>SUBUNIT</scope>
</reference>
<reference key="5">
    <citation type="journal article" date="1995" name="Biochem. J.">
        <title>Aggretin, a novel platelet-aggregation inducer from snake (Calloselasma rhodostoma) venom, activates phospholipase C by acting as a glycoprotein Ia/IIa agonist.</title>
        <authorList>
            <person name="Huang T.-F."/>
            <person name="Liu C.-Z."/>
            <person name="Yang S.-H."/>
        </authorList>
    </citation>
    <scope>FUNCTION</scope>
    <source>
        <tissue>Venom</tissue>
    </source>
</reference>
<reference key="6">
    <citation type="journal article" date="2001" name="Biochem. Biophys. Res. Commun.">
        <title>Aggretin, a C-type lectin protein, induces platelet aggregation via integrin alpha(2)beta(1) and GPIb in a phosphatidylinositol 3-kinase independent pathway.</title>
        <authorList>
            <person name="Chung C.-H."/>
            <person name="Peng H.-C."/>
            <person name="Huang T.-F."/>
        </authorList>
    </citation>
    <scope>FUNCTION</scope>
</reference>
<reference key="7">
    <citation type="journal article" date="2001" name="J. Biol. Chem.">
        <title>Rhodocytin (aggretin) activates platelets lacking alpha(2)beta(1) integrin, glycoprotein VI, and the ligand-binding domain of glycoprotein Ibalpha.</title>
        <authorList>
            <person name="Bergmeier W."/>
            <person name="Bouvard D."/>
            <person name="Eble J.A."/>
            <person name="Mokhtari-Nejad R."/>
            <person name="Schulte V."/>
            <person name="Zirngibl H."/>
            <person name="Brakebusch C."/>
            <person name="Fassler R."/>
            <person name="Nieswandt B."/>
        </authorList>
    </citation>
    <scope>FUNCTION</scope>
</reference>
<reference key="8">
    <citation type="journal article" date="2004" name="Blood">
        <title>Aggretin, a snake venom-derived endothelial integrin alpha 2 beta 1 agonist, induces angiogenesis via expression of vascular endothelial growth factor.</title>
        <authorList>
            <person name="Chung C.-H."/>
            <person name="Wu W.-B."/>
            <person name="Huang T.-F."/>
        </authorList>
    </citation>
    <scope>FUNCTION</scope>
</reference>
<reference key="9">
    <citation type="journal article" date="2006" name="Blood">
        <title>A novel Syk-dependent mechanism of platelet activation by the C-type lectin receptor CLEC-2.</title>
        <authorList>
            <person name="Suzuki-Inoue K."/>
            <person name="Fuller G.L.J."/>
            <person name="Garcia A."/>
            <person name="Eble J.A."/>
            <person name="Poehlmann S."/>
            <person name="Inoue O."/>
            <person name="Gartner T.K."/>
            <person name="Hughan S.C."/>
            <person name="Pearce A.C."/>
            <person name="Laing G.D."/>
            <person name="Theakston R.D.G."/>
            <person name="Schweighoffer E."/>
            <person name="Zitzmann N."/>
            <person name="Morita T."/>
            <person name="Tybulewicz V.L.J."/>
            <person name="Ozaki Y."/>
            <person name="Watson S.P."/>
        </authorList>
    </citation>
    <scope>FUNCTION</scope>
</reference>
<reference key="10">
    <citation type="journal article" date="2008" name="Biochemistry">
        <title>The crystal structure of the platelet activator aggretin reveals a novel (alphabeta)2 dimeric structure.</title>
        <authorList>
            <person name="Hooley E."/>
            <person name="Papagrigoriou E."/>
            <person name="Navdaev A."/>
            <person name="Pandey A.V."/>
            <person name="Clemetson J.M."/>
            <person name="Clemetson K.J."/>
            <person name="Emsley J."/>
        </authorList>
    </citation>
    <scope>X-RAY CRYSTALLOGRAPHY (1.7 ANGSTROMS) OF 24-146</scope>
    <scope>SUBUNIT</scope>
    <scope>DISULFIDE BONDS</scope>
</reference>
<reference key="11">
    <citation type="journal article" date="2008" name="Protein Sci.">
        <title>Crystal structure of rhodocytin, a ligand for the platelet-activating receptor CLEC-2.</title>
        <authorList>
            <person name="Watson A.A."/>
            <person name="Eble J.A."/>
            <person name="O'Callaghan C.A."/>
        </authorList>
    </citation>
    <scope>X-RAY CRYSTALLOGRAPHY (2.41 ANGSTROMS) OF 24-146</scope>
    <scope>SUBUNIT</scope>
    <scope>DISULFIDE BONDS</scope>
</reference>
<name>SLYB_CALRH</name>
<accession>Q9I840</accession>
<evidence type="ECO:0000255" key="1">
    <source>
        <dbReference type="PROSITE-ProRule" id="PRU00040"/>
    </source>
</evidence>
<evidence type="ECO:0000269" key="2">
    <source>
    </source>
</evidence>
<evidence type="ECO:0000269" key="3">
    <source>
    </source>
</evidence>
<evidence type="ECO:0000269" key="4">
    <source>
    </source>
</evidence>
<evidence type="ECO:0000269" key="5">
    <source>
    </source>
</evidence>
<evidence type="ECO:0000269" key="6">
    <source>
    </source>
</evidence>
<evidence type="ECO:0000269" key="7">
    <source>
    </source>
</evidence>
<evidence type="ECO:0000269" key="8">
    <source>
    </source>
</evidence>
<evidence type="ECO:0000269" key="9">
    <source>
    </source>
</evidence>
<evidence type="ECO:0000269" key="10">
    <source>
    </source>
</evidence>
<evidence type="ECO:0000269" key="11">
    <source>
    </source>
</evidence>
<evidence type="ECO:0000269" key="12">
    <source>
    </source>
</evidence>
<evidence type="ECO:0000305" key="13"/>
<evidence type="ECO:0007829" key="14">
    <source>
        <dbReference type="PDB" id="3BX4"/>
    </source>
</evidence>